<reference key="1">
    <citation type="submission" date="2007-06" db="EMBL/GenBank/DDBJ databases">
        <title>Complete sequence of chromosome of Staphylococcus aureus subsp. aureus JH1.</title>
        <authorList>
            <consortium name="US DOE Joint Genome Institute"/>
            <person name="Copeland A."/>
            <person name="Lucas S."/>
            <person name="Lapidus A."/>
            <person name="Barry K."/>
            <person name="Detter J.C."/>
            <person name="Glavina del Rio T."/>
            <person name="Hammon N."/>
            <person name="Israni S."/>
            <person name="Dalin E."/>
            <person name="Tice H."/>
            <person name="Pitluck S."/>
            <person name="Chain P."/>
            <person name="Malfatti S."/>
            <person name="Shin M."/>
            <person name="Vergez L."/>
            <person name="Schmutz J."/>
            <person name="Larimer F."/>
            <person name="Land M."/>
            <person name="Hauser L."/>
            <person name="Kyrpides N."/>
            <person name="Ivanova N."/>
            <person name="Tomasz A."/>
            <person name="Richardson P."/>
        </authorList>
    </citation>
    <scope>NUCLEOTIDE SEQUENCE [LARGE SCALE GENOMIC DNA]</scope>
    <source>
        <strain>JH1</strain>
    </source>
</reference>
<name>MURC_STAA2</name>
<dbReference type="EC" id="6.3.2.8" evidence="1"/>
<dbReference type="EMBL" id="CP000736">
    <property type="protein sequence ID" value="ABR52674.1"/>
    <property type="molecule type" value="Genomic_DNA"/>
</dbReference>
<dbReference type="SMR" id="A6U2K6"/>
<dbReference type="KEGG" id="sah:SaurJH1_1830"/>
<dbReference type="HOGENOM" id="CLU_028104_1_0_9"/>
<dbReference type="UniPathway" id="UPA00219"/>
<dbReference type="GO" id="GO:0005737">
    <property type="term" value="C:cytoplasm"/>
    <property type="evidence" value="ECO:0007669"/>
    <property type="project" value="UniProtKB-SubCell"/>
</dbReference>
<dbReference type="GO" id="GO:0005524">
    <property type="term" value="F:ATP binding"/>
    <property type="evidence" value="ECO:0007669"/>
    <property type="project" value="UniProtKB-UniRule"/>
</dbReference>
<dbReference type="GO" id="GO:0008763">
    <property type="term" value="F:UDP-N-acetylmuramate-L-alanine ligase activity"/>
    <property type="evidence" value="ECO:0007669"/>
    <property type="project" value="UniProtKB-UniRule"/>
</dbReference>
<dbReference type="GO" id="GO:0051301">
    <property type="term" value="P:cell division"/>
    <property type="evidence" value="ECO:0007669"/>
    <property type="project" value="UniProtKB-KW"/>
</dbReference>
<dbReference type="GO" id="GO:0071555">
    <property type="term" value="P:cell wall organization"/>
    <property type="evidence" value="ECO:0007669"/>
    <property type="project" value="UniProtKB-KW"/>
</dbReference>
<dbReference type="GO" id="GO:0009252">
    <property type="term" value="P:peptidoglycan biosynthetic process"/>
    <property type="evidence" value="ECO:0007669"/>
    <property type="project" value="UniProtKB-UniRule"/>
</dbReference>
<dbReference type="GO" id="GO:0008360">
    <property type="term" value="P:regulation of cell shape"/>
    <property type="evidence" value="ECO:0007669"/>
    <property type="project" value="UniProtKB-KW"/>
</dbReference>
<dbReference type="Gene3D" id="3.90.190.20">
    <property type="entry name" value="Mur ligase, C-terminal domain"/>
    <property type="match status" value="1"/>
</dbReference>
<dbReference type="Gene3D" id="3.40.1190.10">
    <property type="entry name" value="Mur-like, catalytic domain"/>
    <property type="match status" value="1"/>
</dbReference>
<dbReference type="Gene3D" id="3.40.50.720">
    <property type="entry name" value="NAD(P)-binding Rossmann-like Domain"/>
    <property type="match status" value="1"/>
</dbReference>
<dbReference type="HAMAP" id="MF_00046">
    <property type="entry name" value="MurC"/>
    <property type="match status" value="1"/>
</dbReference>
<dbReference type="InterPro" id="IPR036565">
    <property type="entry name" value="Mur-like_cat_sf"/>
</dbReference>
<dbReference type="InterPro" id="IPR004101">
    <property type="entry name" value="Mur_ligase_C"/>
</dbReference>
<dbReference type="InterPro" id="IPR036615">
    <property type="entry name" value="Mur_ligase_C_dom_sf"/>
</dbReference>
<dbReference type="InterPro" id="IPR013221">
    <property type="entry name" value="Mur_ligase_cen"/>
</dbReference>
<dbReference type="InterPro" id="IPR000713">
    <property type="entry name" value="Mur_ligase_N"/>
</dbReference>
<dbReference type="InterPro" id="IPR050061">
    <property type="entry name" value="MurCDEF_pg_biosynth"/>
</dbReference>
<dbReference type="InterPro" id="IPR005758">
    <property type="entry name" value="UDP-N-AcMur_Ala_ligase_MurC"/>
</dbReference>
<dbReference type="NCBIfam" id="TIGR01082">
    <property type="entry name" value="murC"/>
    <property type="match status" value="1"/>
</dbReference>
<dbReference type="PANTHER" id="PTHR43445:SF3">
    <property type="entry name" value="UDP-N-ACETYLMURAMATE--L-ALANINE LIGASE"/>
    <property type="match status" value="1"/>
</dbReference>
<dbReference type="PANTHER" id="PTHR43445">
    <property type="entry name" value="UDP-N-ACETYLMURAMATE--L-ALANINE LIGASE-RELATED"/>
    <property type="match status" value="1"/>
</dbReference>
<dbReference type="Pfam" id="PF01225">
    <property type="entry name" value="Mur_ligase"/>
    <property type="match status" value="1"/>
</dbReference>
<dbReference type="Pfam" id="PF02875">
    <property type="entry name" value="Mur_ligase_C"/>
    <property type="match status" value="1"/>
</dbReference>
<dbReference type="Pfam" id="PF08245">
    <property type="entry name" value="Mur_ligase_M"/>
    <property type="match status" value="1"/>
</dbReference>
<dbReference type="SUPFAM" id="SSF51984">
    <property type="entry name" value="MurCD N-terminal domain"/>
    <property type="match status" value="1"/>
</dbReference>
<dbReference type="SUPFAM" id="SSF53623">
    <property type="entry name" value="MurD-like peptide ligases, catalytic domain"/>
    <property type="match status" value="1"/>
</dbReference>
<dbReference type="SUPFAM" id="SSF53244">
    <property type="entry name" value="MurD-like peptide ligases, peptide-binding domain"/>
    <property type="match status" value="1"/>
</dbReference>
<evidence type="ECO:0000255" key="1">
    <source>
        <dbReference type="HAMAP-Rule" id="MF_00046"/>
    </source>
</evidence>
<proteinExistence type="inferred from homology"/>
<sequence length="437" mass="49174">MTHYHFVGIKGSGMSSLAQIMHDLGHEVQGSDIENYVFTEVALRNKGIKILPFDANNIKEDMVVIQGNAFASSHEEIVRAHQLKLDVVSYNDFLGQIIDQYTSVAVTGAHGKTSTTGLLSHVMNGDKKTSFLIGDGTGMGLPESDYFAFEACEYRRHFLSYKPDYAIMTNIDFDHPDYFKDINDVFDAFQEMAHNVKKGIIAWGDDEHLRKIEADVPIYYYGFKDSDDIYAQNIQITDKGTAFDVYVDGEFYDHFLSPQYGDHTVLNALAVIAISYLEKLDVTNIKEALETFGGVKRRFNETTIANQVIVDDYAHHPREISATIETARKKYPHKEVVAVFQPHTFSRTQAFLNEFAESLSKADRVFLCEIFGSIRENTGALTIQDLIDKIEGASLINEDSINVLEQFDNAVVLFMGAGDIQKLQNAYLDKLGMKNAF</sequence>
<keyword id="KW-0067">ATP-binding</keyword>
<keyword id="KW-0131">Cell cycle</keyword>
<keyword id="KW-0132">Cell division</keyword>
<keyword id="KW-0133">Cell shape</keyword>
<keyword id="KW-0961">Cell wall biogenesis/degradation</keyword>
<keyword id="KW-0963">Cytoplasm</keyword>
<keyword id="KW-0436">Ligase</keyword>
<keyword id="KW-0547">Nucleotide-binding</keyword>
<keyword id="KW-0573">Peptidoglycan synthesis</keyword>
<protein>
    <recommendedName>
        <fullName evidence="1">UDP-N-acetylmuramate--L-alanine ligase</fullName>
        <ecNumber evidence="1">6.3.2.8</ecNumber>
    </recommendedName>
    <alternativeName>
        <fullName evidence="1">UDP-N-acetylmuramoyl-L-alanine synthetase</fullName>
    </alternativeName>
</protein>
<feature type="chain" id="PRO_1000074757" description="UDP-N-acetylmuramate--L-alanine ligase">
    <location>
        <begin position="1"/>
        <end position="437"/>
    </location>
</feature>
<feature type="binding site" evidence="1">
    <location>
        <begin position="108"/>
        <end position="114"/>
    </location>
    <ligand>
        <name>ATP</name>
        <dbReference type="ChEBI" id="CHEBI:30616"/>
    </ligand>
</feature>
<accession>A6U2K6</accession>
<organism>
    <name type="scientific">Staphylococcus aureus (strain JH1)</name>
    <dbReference type="NCBI Taxonomy" id="359787"/>
    <lineage>
        <taxon>Bacteria</taxon>
        <taxon>Bacillati</taxon>
        <taxon>Bacillota</taxon>
        <taxon>Bacilli</taxon>
        <taxon>Bacillales</taxon>
        <taxon>Staphylococcaceae</taxon>
        <taxon>Staphylococcus</taxon>
    </lineage>
</organism>
<gene>
    <name evidence="1" type="primary">murC</name>
    <name type="ordered locus">SaurJH1_1830</name>
</gene>
<comment type="function">
    <text evidence="1">Cell wall formation.</text>
</comment>
<comment type="catalytic activity">
    <reaction evidence="1">
        <text>UDP-N-acetyl-alpha-D-muramate + L-alanine + ATP = UDP-N-acetyl-alpha-D-muramoyl-L-alanine + ADP + phosphate + H(+)</text>
        <dbReference type="Rhea" id="RHEA:23372"/>
        <dbReference type="ChEBI" id="CHEBI:15378"/>
        <dbReference type="ChEBI" id="CHEBI:30616"/>
        <dbReference type="ChEBI" id="CHEBI:43474"/>
        <dbReference type="ChEBI" id="CHEBI:57972"/>
        <dbReference type="ChEBI" id="CHEBI:70757"/>
        <dbReference type="ChEBI" id="CHEBI:83898"/>
        <dbReference type="ChEBI" id="CHEBI:456216"/>
        <dbReference type="EC" id="6.3.2.8"/>
    </reaction>
</comment>
<comment type="pathway">
    <text evidence="1">Cell wall biogenesis; peptidoglycan biosynthesis.</text>
</comment>
<comment type="subcellular location">
    <subcellularLocation>
        <location evidence="1">Cytoplasm</location>
    </subcellularLocation>
</comment>
<comment type="similarity">
    <text evidence="1">Belongs to the MurCDEF family.</text>
</comment>